<name>RIMM_ECOSE</name>
<reference key="1">
    <citation type="journal article" date="2008" name="DNA Res.">
        <title>Complete genome sequence and comparative analysis of the wild-type commensal Escherichia coli strain SE11 isolated from a healthy adult.</title>
        <authorList>
            <person name="Oshima K."/>
            <person name="Toh H."/>
            <person name="Ogura Y."/>
            <person name="Sasamoto H."/>
            <person name="Morita H."/>
            <person name="Park S.-H."/>
            <person name="Ooka T."/>
            <person name="Iyoda S."/>
            <person name="Taylor T.D."/>
            <person name="Hayashi T."/>
            <person name="Itoh K."/>
            <person name="Hattori M."/>
        </authorList>
    </citation>
    <scope>NUCLEOTIDE SEQUENCE [LARGE SCALE GENOMIC DNA]</scope>
    <source>
        <strain>SE11</strain>
    </source>
</reference>
<accession>B6I630</accession>
<protein>
    <recommendedName>
        <fullName evidence="1">Ribosome maturation factor RimM</fullName>
    </recommendedName>
</protein>
<proteinExistence type="inferred from homology"/>
<organism>
    <name type="scientific">Escherichia coli (strain SE11)</name>
    <dbReference type="NCBI Taxonomy" id="409438"/>
    <lineage>
        <taxon>Bacteria</taxon>
        <taxon>Pseudomonadati</taxon>
        <taxon>Pseudomonadota</taxon>
        <taxon>Gammaproteobacteria</taxon>
        <taxon>Enterobacterales</taxon>
        <taxon>Enterobacteriaceae</taxon>
        <taxon>Escherichia</taxon>
    </lineage>
</organism>
<feature type="chain" id="PRO_1000089500" description="Ribosome maturation factor RimM">
    <location>
        <begin position="1"/>
        <end position="182"/>
    </location>
</feature>
<feature type="domain" description="PRC barrel" evidence="1">
    <location>
        <begin position="102"/>
        <end position="182"/>
    </location>
</feature>
<sequence>MSKQLTAQAPVDPIVLGKMGSSYGIRGWLRVFSSTEDAESIFDYQPWFIQKAGQWQQVQLESWKHHNQDMIIKLKGVDDRDAANLLTNCEIVVDSSQLPQLEEGDYYWKDLMGCQVVTTEGYDLGKVVDMMETGSNDVLVIKANLKDAFGIKERLVPFLDGQVIKKVDLTTRSIEVDWDPGF</sequence>
<dbReference type="EMBL" id="AP009240">
    <property type="protein sequence ID" value="BAG78416.1"/>
    <property type="molecule type" value="Genomic_DNA"/>
</dbReference>
<dbReference type="RefSeq" id="WP_000043335.1">
    <property type="nucleotide sequence ID" value="NC_011415.1"/>
</dbReference>
<dbReference type="SMR" id="B6I630"/>
<dbReference type="GeneID" id="93774458"/>
<dbReference type="KEGG" id="ecy:ECSE_2892"/>
<dbReference type="HOGENOM" id="CLU_077636_1_0_6"/>
<dbReference type="Proteomes" id="UP000008199">
    <property type="component" value="Chromosome"/>
</dbReference>
<dbReference type="GO" id="GO:0005737">
    <property type="term" value="C:cytoplasm"/>
    <property type="evidence" value="ECO:0007669"/>
    <property type="project" value="UniProtKB-SubCell"/>
</dbReference>
<dbReference type="GO" id="GO:0005840">
    <property type="term" value="C:ribosome"/>
    <property type="evidence" value="ECO:0007669"/>
    <property type="project" value="InterPro"/>
</dbReference>
<dbReference type="GO" id="GO:0043022">
    <property type="term" value="F:ribosome binding"/>
    <property type="evidence" value="ECO:0007669"/>
    <property type="project" value="InterPro"/>
</dbReference>
<dbReference type="GO" id="GO:0042274">
    <property type="term" value="P:ribosomal small subunit biogenesis"/>
    <property type="evidence" value="ECO:0007669"/>
    <property type="project" value="UniProtKB-UniRule"/>
</dbReference>
<dbReference type="GO" id="GO:0006364">
    <property type="term" value="P:rRNA processing"/>
    <property type="evidence" value="ECO:0007669"/>
    <property type="project" value="UniProtKB-UniRule"/>
</dbReference>
<dbReference type="FunFam" id="2.30.30.240:FF:000001">
    <property type="entry name" value="Ribosome maturation factor RimM"/>
    <property type="match status" value="1"/>
</dbReference>
<dbReference type="FunFam" id="2.40.30.60:FF:000001">
    <property type="entry name" value="Ribosome maturation factor RimM"/>
    <property type="match status" value="1"/>
</dbReference>
<dbReference type="Gene3D" id="2.30.30.240">
    <property type="entry name" value="PRC-barrel domain"/>
    <property type="match status" value="1"/>
</dbReference>
<dbReference type="Gene3D" id="2.40.30.60">
    <property type="entry name" value="RimM"/>
    <property type="match status" value="1"/>
</dbReference>
<dbReference type="HAMAP" id="MF_00014">
    <property type="entry name" value="Ribosome_mat_RimM"/>
    <property type="match status" value="1"/>
</dbReference>
<dbReference type="InterPro" id="IPR011033">
    <property type="entry name" value="PRC_barrel-like_sf"/>
</dbReference>
<dbReference type="InterPro" id="IPR056792">
    <property type="entry name" value="PRC_RimM"/>
</dbReference>
<dbReference type="InterPro" id="IPR011961">
    <property type="entry name" value="RimM"/>
</dbReference>
<dbReference type="InterPro" id="IPR002676">
    <property type="entry name" value="RimM_N"/>
</dbReference>
<dbReference type="InterPro" id="IPR036976">
    <property type="entry name" value="RimM_N_sf"/>
</dbReference>
<dbReference type="InterPro" id="IPR009000">
    <property type="entry name" value="Transl_B-barrel_sf"/>
</dbReference>
<dbReference type="NCBIfam" id="TIGR02273">
    <property type="entry name" value="16S_RimM"/>
    <property type="match status" value="1"/>
</dbReference>
<dbReference type="PANTHER" id="PTHR33692">
    <property type="entry name" value="RIBOSOME MATURATION FACTOR RIMM"/>
    <property type="match status" value="1"/>
</dbReference>
<dbReference type="PANTHER" id="PTHR33692:SF1">
    <property type="entry name" value="RIBOSOME MATURATION FACTOR RIMM"/>
    <property type="match status" value="1"/>
</dbReference>
<dbReference type="Pfam" id="PF24986">
    <property type="entry name" value="PRC_RimM"/>
    <property type="match status" value="1"/>
</dbReference>
<dbReference type="Pfam" id="PF01782">
    <property type="entry name" value="RimM"/>
    <property type="match status" value="1"/>
</dbReference>
<dbReference type="SUPFAM" id="SSF50346">
    <property type="entry name" value="PRC-barrel domain"/>
    <property type="match status" value="1"/>
</dbReference>
<dbReference type="SUPFAM" id="SSF50447">
    <property type="entry name" value="Translation proteins"/>
    <property type="match status" value="1"/>
</dbReference>
<comment type="function">
    <text evidence="1">An accessory protein needed during the final step in the assembly of 30S ribosomal subunit, possibly for assembly of the head region. Essential for efficient processing of 16S rRNA. May be needed both before and after RbfA during the maturation of 16S rRNA. It has affinity for free ribosomal 30S subunits but not for 70S ribosomes.</text>
</comment>
<comment type="subunit">
    <text evidence="1">Binds ribosomal protein uS19.</text>
</comment>
<comment type="subcellular location">
    <subcellularLocation>
        <location evidence="1">Cytoplasm</location>
    </subcellularLocation>
</comment>
<comment type="domain">
    <text evidence="1">The PRC barrel domain binds ribosomal protein uS19.</text>
</comment>
<comment type="similarity">
    <text evidence="1">Belongs to the RimM family.</text>
</comment>
<evidence type="ECO:0000255" key="1">
    <source>
        <dbReference type="HAMAP-Rule" id="MF_00014"/>
    </source>
</evidence>
<gene>
    <name evidence="1" type="primary">rimM</name>
    <name type="ordered locus">ECSE_2892</name>
</gene>
<keyword id="KW-0143">Chaperone</keyword>
<keyword id="KW-0963">Cytoplasm</keyword>
<keyword id="KW-0690">Ribosome biogenesis</keyword>
<keyword id="KW-0698">rRNA processing</keyword>